<keyword id="KW-0238">DNA-binding</keyword>
<keyword id="KW-0489">Methyltransferase</keyword>
<keyword id="KW-1185">Reference proteome</keyword>
<keyword id="KW-0680">Restriction system</keyword>
<keyword id="KW-0949">S-adenosyl-L-methionine</keyword>
<keyword id="KW-0808">Transferase</keyword>
<feature type="chain" id="PRO_0000087918" description="Type II methyltransferase M.AvaI">
    <location>
        <begin position="1"/>
        <end position="482"/>
    </location>
</feature>
<name>MTA1_NOSS1</name>
<organism>
    <name type="scientific">Nostoc sp. (strain PCC 7120 / SAG 25.82 / UTEX 2576)</name>
    <dbReference type="NCBI Taxonomy" id="103690"/>
    <lineage>
        <taxon>Bacteria</taxon>
        <taxon>Bacillati</taxon>
        <taxon>Cyanobacteriota</taxon>
        <taxon>Cyanophyceae</taxon>
        <taxon>Nostocales</taxon>
        <taxon>Nostocaceae</taxon>
        <taxon>Nostoc</taxon>
    </lineage>
</organism>
<comment type="function">
    <text evidence="1 2">An alpha subtype methylase that recognizes the double-stranded sequence 5'-CYCGRG-3', methylates C-1 on both strands, and protects the DNA from cleavage by the AvaI endonuclease.</text>
</comment>
<comment type="catalytic activity">
    <reaction>
        <text>a 2'-deoxycytidine in DNA + S-adenosyl-L-methionine = an N(4)-methyl-2'-deoxycytidine in DNA + S-adenosyl-L-homocysteine + H(+)</text>
        <dbReference type="Rhea" id="RHEA:16857"/>
        <dbReference type="Rhea" id="RHEA-COMP:11369"/>
        <dbReference type="Rhea" id="RHEA-COMP:13674"/>
        <dbReference type="ChEBI" id="CHEBI:15378"/>
        <dbReference type="ChEBI" id="CHEBI:57856"/>
        <dbReference type="ChEBI" id="CHEBI:59789"/>
        <dbReference type="ChEBI" id="CHEBI:85452"/>
        <dbReference type="ChEBI" id="CHEBI:137933"/>
        <dbReference type="EC" id="2.1.1.113"/>
    </reaction>
</comment>
<comment type="similarity">
    <text evidence="3">Belongs to the N(4)/N(6)-methyltransferase family. N(4) subfamily.</text>
</comment>
<sequence length="482" mass="56579">MTSFELESPIEIKTDPTDLDQESDSFVQEISRFNKALEQRFRDKMRLHESLSRKIVSFQANKSKPQYRWFKYKEAFSVDLVNQLIFEYEKKSFERILDPFAGAGTMLFACSDAGIQADGIEVLPIGQEIIEVRKIIQRQFRREDFLRLIEWYKQKPWNQHNNRKYLNRLRITDGAYPPETEASIERFLFSIEKENILVKQVLRFALLCILESISYTRKDGQYLRWDKRAFRKSGSDKFDKGKILDFDEAITEQIKLILNDSFDLISNTLFCYGTQRSGINLFNASCLKILPEFEQDFYDCIITSPPYCNRYDYTRTYALELALLGVGERDIVQLRQDMLSCTVENKEKSLIHNWQEALRILDKQELLQSILRFLERELERKKLNNNGIPRMIKGYFYEMACVIIECFRVLKNGSPLFMVNDNVRYAGIDISVDLILSNIAEEIGFNVEKILVLPTGKGNSSQQMGTHGRKTLRKCVYVWRKP</sequence>
<accession>P0A461</accession>
<accession>P70802</accession>
<dbReference type="EC" id="2.1.1.113"/>
<dbReference type="EMBL" id="BA000019">
    <property type="protein sequence ID" value="BAB75331.1"/>
    <property type="molecule type" value="Genomic_DNA"/>
</dbReference>
<dbReference type="PIR" id="AI2259">
    <property type="entry name" value="AI2259"/>
</dbReference>
<dbReference type="SMR" id="P0A461"/>
<dbReference type="STRING" id="103690.gene:10495674"/>
<dbReference type="REBASE" id="3287">
    <property type="entry name" value="M.AvaI"/>
</dbReference>
<dbReference type="DNASU" id="1107230"/>
<dbReference type="KEGG" id="ana:all3632"/>
<dbReference type="eggNOG" id="COG0863">
    <property type="taxonomic scope" value="Bacteria"/>
</dbReference>
<dbReference type="OrthoDB" id="9800801at2"/>
<dbReference type="PRO" id="PR:P0A461"/>
<dbReference type="Proteomes" id="UP000002483">
    <property type="component" value="Chromosome"/>
</dbReference>
<dbReference type="GO" id="GO:0003677">
    <property type="term" value="F:DNA binding"/>
    <property type="evidence" value="ECO:0007669"/>
    <property type="project" value="UniProtKB-KW"/>
</dbReference>
<dbReference type="GO" id="GO:0015667">
    <property type="term" value="F:site-specific DNA-methyltransferase (cytosine-N4-specific) activity"/>
    <property type="evidence" value="ECO:0007669"/>
    <property type="project" value="UniProtKB-EC"/>
</dbReference>
<dbReference type="GO" id="GO:0009307">
    <property type="term" value="P:DNA restriction-modification system"/>
    <property type="evidence" value="ECO:0007669"/>
    <property type="project" value="UniProtKB-KW"/>
</dbReference>
<dbReference type="GO" id="GO:0032259">
    <property type="term" value="P:methylation"/>
    <property type="evidence" value="ECO:0007669"/>
    <property type="project" value="UniProtKB-KW"/>
</dbReference>
<dbReference type="Gene3D" id="3.40.50.150">
    <property type="entry name" value="Vaccinia Virus protein VP39"/>
    <property type="match status" value="2"/>
</dbReference>
<dbReference type="InterPro" id="IPR017985">
    <property type="entry name" value="MeTrfase_CN4_CS"/>
</dbReference>
<dbReference type="InterPro" id="IPR029063">
    <property type="entry name" value="SAM-dependent_MTases_sf"/>
</dbReference>
<dbReference type="SUPFAM" id="SSF53335">
    <property type="entry name" value="S-adenosyl-L-methionine-dependent methyltransferases"/>
    <property type="match status" value="2"/>
</dbReference>
<dbReference type="PROSITE" id="PS00093">
    <property type="entry name" value="N4_MTASE"/>
    <property type="match status" value="1"/>
</dbReference>
<evidence type="ECO:0000250" key="1">
    <source>
        <dbReference type="UniProtKB" id="P0A462"/>
    </source>
</evidence>
<evidence type="ECO:0000303" key="2">
    <source>
    </source>
</evidence>
<evidence type="ECO:0000305" key="3"/>
<proteinExistence type="inferred from homology"/>
<gene>
    <name type="primary">avaIM</name>
    <name type="ordered locus">all3632</name>
</gene>
<protein>
    <recommendedName>
        <fullName evidence="2">Type II methyltransferase M.AvaI</fullName>
        <shortName evidence="2">M.AvaI</shortName>
        <ecNumber>2.1.1.113</ecNumber>
    </recommendedName>
    <alternativeName>
        <fullName>Modification methylase AvaI</fullName>
    </alternativeName>
    <alternativeName>
        <fullName>N(4) cytosine-specific methyltransferase AvaI</fullName>
    </alternativeName>
</protein>
<reference key="1">
    <citation type="journal article" date="2001" name="DNA Res.">
        <title>Complete genomic sequence of the filamentous nitrogen-fixing cyanobacterium Anabaena sp. strain PCC 7120.</title>
        <authorList>
            <person name="Kaneko T."/>
            <person name="Nakamura Y."/>
            <person name="Wolk C.P."/>
            <person name="Kuritz T."/>
            <person name="Sasamoto S."/>
            <person name="Watanabe A."/>
            <person name="Iriguchi M."/>
            <person name="Ishikawa A."/>
            <person name="Kawashima K."/>
            <person name="Kimura T."/>
            <person name="Kishida Y."/>
            <person name="Kohara M."/>
            <person name="Matsumoto M."/>
            <person name="Matsuno A."/>
            <person name="Muraki A."/>
            <person name="Nakazaki N."/>
            <person name="Shimpo S."/>
            <person name="Sugimoto M."/>
            <person name="Takazawa M."/>
            <person name="Yamada M."/>
            <person name="Yasuda M."/>
            <person name="Tabata S."/>
        </authorList>
    </citation>
    <scope>NUCLEOTIDE SEQUENCE [LARGE SCALE GENOMIC DNA]</scope>
    <source>
        <strain>PCC 7120 / SAG 25.82 / UTEX 2576</strain>
    </source>
</reference>
<reference key="2">
    <citation type="journal article" date="2003" name="Nucleic Acids Res.">
        <title>A nomenclature for restriction enzymes, DNA methyltransferases, homing endonucleases and their genes.</title>
        <authorList>
            <person name="Roberts R.J."/>
            <person name="Belfort M."/>
            <person name="Bestor T."/>
            <person name="Bhagwat A.S."/>
            <person name="Bickle T.A."/>
            <person name="Bitinaite J."/>
            <person name="Blumenthal R.M."/>
            <person name="Degtyarev S.K."/>
            <person name="Dryden D.T."/>
            <person name="Dybvig K."/>
            <person name="Firman K."/>
            <person name="Gromova E.S."/>
            <person name="Gumport R.I."/>
            <person name="Halford S.E."/>
            <person name="Hattman S."/>
            <person name="Heitman J."/>
            <person name="Hornby D.P."/>
            <person name="Janulaitis A."/>
            <person name="Jeltsch A."/>
            <person name="Josephsen J."/>
            <person name="Kiss A."/>
            <person name="Klaenhammer T.R."/>
            <person name="Kobayashi I."/>
            <person name="Kong H."/>
            <person name="Krueger D.H."/>
            <person name="Lacks S."/>
            <person name="Marinus M.G."/>
            <person name="Miyahara M."/>
            <person name="Morgan R.D."/>
            <person name="Murray N.E."/>
            <person name="Nagaraja V."/>
            <person name="Piekarowicz A."/>
            <person name="Pingoud A."/>
            <person name="Raleigh E."/>
            <person name="Rao D.N."/>
            <person name="Reich N."/>
            <person name="Repin V.E."/>
            <person name="Selker E.U."/>
            <person name="Shaw P.C."/>
            <person name="Stein D.C."/>
            <person name="Stoddard B.L."/>
            <person name="Szybalski W."/>
            <person name="Trautner T.A."/>
            <person name="Van Etten J.L."/>
            <person name="Vitor J.M."/>
            <person name="Wilson G.G."/>
            <person name="Xu S.Y."/>
        </authorList>
    </citation>
    <scope>NOMENCLATURE</scope>
    <scope>SUBTYPE</scope>
</reference>